<reference key="1">
    <citation type="submission" date="2008-06" db="EMBL/GenBank/DDBJ databases">
        <title>Complete sequence of Chlorobium phaeobacteroides BS1.</title>
        <authorList>
            <consortium name="US DOE Joint Genome Institute"/>
            <person name="Lucas S."/>
            <person name="Copeland A."/>
            <person name="Lapidus A."/>
            <person name="Glavina del Rio T."/>
            <person name="Dalin E."/>
            <person name="Tice H."/>
            <person name="Bruce D."/>
            <person name="Goodwin L."/>
            <person name="Pitluck S."/>
            <person name="Schmutz J."/>
            <person name="Larimer F."/>
            <person name="Land M."/>
            <person name="Hauser L."/>
            <person name="Kyrpides N."/>
            <person name="Ovchinnikova G."/>
            <person name="Li T."/>
            <person name="Liu Z."/>
            <person name="Zhao F."/>
            <person name="Overmann J."/>
            <person name="Bryant D.A."/>
            <person name="Richardson P."/>
        </authorList>
    </citation>
    <scope>NUCLEOTIDE SEQUENCE [LARGE SCALE GENOMIC DNA]</scope>
    <source>
        <strain>BS1</strain>
    </source>
</reference>
<dbReference type="EC" id="2.7.7.60" evidence="1"/>
<dbReference type="EMBL" id="CP001101">
    <property type="protein sequence ID" value="ACE03966.1"/>
    <property type="molecule type" value="Genomic_DNA"/>
</dbReference>
<dbReference type="SMR" id="B3EQ34"/>
<dbReference type="STRING" id="331678.Cphamn1_1025"/>
<dbReference type="KEGG" id="cpb:Cphamn1_1025"/>
<dbReference type="eggNOG" id="COG1211">
    <property type="taxonomic scope" value="Bacteria"/>
</dbReference>
<dbReference type="HOGENOM" id="CLU_061281_2_2_10"/>
<dbReference type="OrthoDB" id="9806837at2"/>
<dbReference type="UniPathway" id="UPA00056">
    <property type="reaction ID" value="UER00093"/>
</dbReference>
<dbReference type="GO" id="GO:0050518">
    <property type="term" value="F:2-C-methyl-D-erythritol 4-phosphate cytidylyltransferase activity"/>
    <property type="evidence" value="ECO:0007669"/>
    <property type="project" value="UniProtKB-UniRule"/>
</dbReference>
<dbReference type="GO" id="GO:0019288">
    <property type="term" value="P:isopentenyl diphosphate biosynthetic process, methylerythritol 4-phosphate pathway"/>
    <property type="evidence" value="ECO:0007669"/>
    <property type="project" value="UniProtKB-UniRule"/>
</dbReference>
<dbReference type="CDD" id="cd02516">
    <property type="entry name" value="CDP-ME_synthetase"/>
    <property type="match status" value="1"/>
</dbReference>
<dbReference type="FunFam" id="3.90.550.10:FF:000003">
    <property type="entry name" value="2-C-methyl-D-erythritol 4-phosphate cytidylyltransferase"/>
    <property type="match status" value="1"/>
</dbReference>
<dbReference type="Gene3D" id="3.90.550.10">
    <property type="entry name" value="Spore Coat Polysaccharide Biosynthesis Protein SpsA, Chain A"/>
    <property type="match status" value="1"/>
</dbReference>
<dbReference type="HAMAP" id="MF_00108">
    <property type="entry name" value="IspD"/>
    <property type="match status" value="1"/>
</dbReference>
<dbReference type="InterPro" id="IPR001228">
    <property type="entry name" value="IspD"/>
</dbReference>
<dbReference type="InterPro" id="IPR034683">
    <property type="entry name" value="IspD/TarI"/>
</dbReference>
<dbReference type="InterPro" id="IPR050088">
    <property type="entry name" value="IspD/TarI_cytidylyltransf_bact"/>
</dbReference>
<dbReference type="InterPro" id="IPR018294">
    <property type="entry name" value="ISPD_synthase_CS"/>
</dbReference>
<dbReference type="InterPro" id="IPR029044">
    <property type="entry name" value="Nucleotide-diphossugar_trans"/>
</dbReference>
<dbReference type="NCBIfam" id="TIGR00453">
    <property type="entry name" value="ispD"/>
    <property type="match status" value="1"/>
</dbReference>
<dbReference type="PANTHER" id="PTHR32125">
    <property type="entry name" value="2-C-METHYL-D-ERYTHRITOL 4-PHOSPHATE CYTIDYLYLTRANSFERASE, CHLOROPLASTIC"/>
    <property type="match status" value="1"/>
</dbReference>
<dbReference type="PANTHER" id="PTHR32125:SF4">
    <property type="entry name" value="2-C-METHYL-D-ERYTHRITOL 4-PHOSPHATE CYTIDYLYLTRANSFERASE, CHLOROPLASTIC"/>
    <property type="match status" value="1"/>
</dbReference>
<dbReference type="Pfam" id="PF01128">
    <property type="entry name" value="IspD"/>
    <property type="match status" value="1"/>
</dbReference>
<dbReference type="SUPFAM" id="SSF53448">
    <property type="entry name" value="Nucleotide-diphospho-sugar transferases"/>
    <property type="match status" value="1"/>
</dbReference>
<dbReference type="PROSITE" id="PS01295">
    <property type="entry name" value="ISPD"/>
    <property type="match status" value="1"/>
</dbReference>
<sequence length="252" mass="27976">MSAYAIIAASGVGKRMKLQGSLSKQFLQIGGFPVIYHTLSAFERSASVDSVFIATRQESIELLENMRDEYGFTKIAAIIPGGKERQDSIYNCIELIERQILDSGTAPDAILVHDGARPFIQPDEIDEIAALSAQYGACVPATKPKDTIKFISENDPGYFGRTLDRSRLLQVQTPQGFASKTLIQAHKHARLEQTYATDDAALVEEFFPEQHIRIHETGYHNIKITTPEDIHLAEAILAKLQSQQELTSSKKN</sequence>
<evidence type="ECO:0000255" key="1">
    <source>
        <dbReference type="HAMAP-Rule" id="MF_00108"/>
    </source>
</evidence>
<keyword id="KW-0414">Isoprene biosynthesis</keyword>
<keyword id="KW-0548">Nucleotidyltransferase</keyword>
<keyword id="KW-0808">Transferase</keyword>
<accession>B3EQ34</accession>
<gene>
    <name evidence="1" type="primary">ispD</name>
    <name type="ordered locus">Cphamn1_1025</name>
</gene>
<feature type="chain" id="PRO_1000094317" description="2-C-methyl-D-erythritol 4-phosphate cytidylyltransferase">
    <location>
        <begin position="1"/>
        <end position="252"/>
    </location>
</feature>
<feature type="site" description="Transition state stabilizer" evidence="1">
    <location>
        <position position="15"/>
    </location>
</feature>
<feature type="site" description="Transition state stabilizer" evidence="1">
    <location>
        <position position="24"/>
    </location>
</feature>
<feature type="site" description="Positions MEP for the nucleophilic attack" evidence="1">
    <location>
        <position position="165"/>
    </location>
</feature>
<feature type="site" description="Positions MEP for the nucleophilic attack" evidence="1">
    <location>
        <position position="223"/>
    </location>
</feature>
<name>ISPD_CHLPB</name>
<organism>
    <name type="scientific">Chlorobium phaeobacteroides (strain BS1)</name>
    <dbReference type="NCBI Taxonomy" id="331678"/>
    <lineage>
        <taxon>Bacteria</taxon>
        <taxon>Pseudomonadati</taxon>
        <taxon>Chlorobiota</taxon>
        <taxon>Chlorobiia</taxon>
        <taxon>Chlorobiales</taxon>
        <taxon>Chlorobiaceae</taxon>
        <taxon>Chlorobium/Pelodictyon group</taxon>
        <taxon>Chlorobium</taxon>
    </lineage>
</organism>
<comment type="function">
    <text evidence="1">Catalyzes the formation of 4-diphosphocytidyl-2-C-methyl-D-erythritol from CTP and 2-C-methyl-D-erythritol 4-phosphate (MEP).</text>
</comment>
<comment type="catalytic activity">
    <reaction evidence="1">
        <text>2-C-methyl-D-erythritol 4-phosphate + CTP + H(+) = 4-CDP-2-C-methyl-D-erythritol + diphosphate</text>
        <dbReference type="Rhea" id="RHEA:13429"/>
        <dbReference type="ChEBI" id="CHEBI:15378"/>
        <dbReference type="ChEBI" id="CHEBI:33019"/>
        <dbReference type="ChEBI" id="CHEBI:37563"/>
        <dbReference type="ChEBI" id="CHEBI:57823"/>
        <dbReference type="ChEBI" id="CHEBI:58262"/>
        <dbReference type="EC" id="2.7.7.60"/>
    </reaction>
</comment>
<comment type="pathway">
    <text evidence="1">Isoprenoid biosynthesis; isopentenyl diphosphate biosynthesis via DXP pathway; isopentenyl diphosphate from 1-deoxy-D-xylulose 5-phosphate: step 2/6.</text>
</comment>
<comment type="similarity">
    <text evidence="1">Belongs to the IspD/TarI cytidylyltransferase family. IspD subfamily.</text>
</comment>
<proteinExistence type="inferred from homology"/>
<protein>
    <recommendedName>
        <fullName evidence="1">2-C-methyl-D-erythritol 4-phosphate cytidylyltransferase</fullName>
        <ecNumber evidence="1">2.7.7.60</ecNumber>
    </recommendedName>
    <alternativeName>
        <fullName evidence="1">4-diphosphocytidyl-2C-methyl-D-erythritol synthase</fullName>
    </alternativeName>
    <alternativeName>
        <fullName evidence="1">MEP cytidylyltransferase</fullName>
        <shortName evidence="1">MCT</shortName>
    </alternativeName>
</protein>